<feature type="chain" id="PRO_0000087669" description="Omega-hexatoxin-Hv2a" evidence="1">
    <location>
        <begin position="1"/>
        <end position="45"/>
    </location>
</feature>
<feature type="disulfide bond" evidence="1 7 8">
    <location>
        <begin position="4"/>
        <end position="18"/>
    </location>
</feature>
<feature type="disulfide bond" evidence="1 7 8">
    <location>
        <begin position="11"/>
        <end position="24"/>
    </location>
</feature>
<feature type="disulfide bond" evidence="1 7 8">
    <location>
        <begin position="17"/>
        <end position="29"/>
    </location>
</feature>
<feature type="strand" evidence="9">
    <location>
        <begin position="8"/>
        <end position="10"/>
    </location>
</feature>
<feature type="helix" evidence="9">
    <location>
        <begin position="14"/>
        <end position="16"/>
    </location>
</feature>
<feature type="strand" evidence="9">
    <location>
        <begin position="23"/>
        <end position="25"/>
    </location>
</feature>
<feature type="strand" evidence="9">
    <location>
        <begin position="28"/>
        <end position="30"/>
    </location>
</feature>
<protein>
    <recommendedName>
        <fullName>Omega-hexatoxin-Hv2a</fullName>
        <shortName>Omega-HXTX-Hv2a</shortName>
    </recommendedName>
    <alternativeName>
        <fullName>Omega-atracotoxin-Hv2a</fullName>
        <shortName>AcTx-Hv2</shortName>
        <shortName>Omega-AcTx-Hv2a</shortName>
    </alternativeName>
</protein>
<organism>
    <name type="scientific">Hadronyche versuta</name>
    <name type="common">Blue mountains funnel-web spider</name>
    <name type="synonym">Atrax versutus</name>
    <dbReference type="NCBI Taxonomy" id="6904"/>
    <lineage>
        <taxon>Eukaryota</taxon>
        <taxon>Metazoa</taxon>
        <taxon>Ecdysozoa</taxon>
        <taxon>Arthropoda</taxon>
        <taxon>Chelicerata</taxon>
        <taxon>Arachnida</taxon>
        <taxon>Araneae</taxon>
        <taxon>Mygalomorphae</taxon>
        <taxon>Hexathelidae</taxon>
        <taxon>Hadronyche</taxon>
    </lineage>
</organism>
<evidence type="ECO:0000269" key="1">
    <source>
    </source>
</evidence>
<evidence type="ECO:0000269" key="2">
    <source>
    </source>
</evidence>
<evidence type="ECO:0000305" key="3"/>
<evidence type="ECO:0000305" key="4">
    <source>
    </source>
</evidence>
<evidence type="ECO:0000312" key="5">
    <source>
        <dbReference type="PDB" id="1G9P"/>
    </source>
</evidence>
<evidence type="ECO:0000312" key="6">
    <source>
        <dbReference type="PDB" id="1HP3"/>
    </source>
</evidence>
<evidence type="ECO:0007744" key="7">
    <source>
        <dbReference type="PDB" id="1G9P"/>
    </source>
</evidence>
<evidence type="ECO:0007744" key="8">
    <source>
        <dbReference type="PDB" id="1HP3"/>
    </source>
</evidence>
<evidence type="ECO:0007829" key="9">
    <source>
        <dbReference type="PDB" id="1G9P"/>
    </source>
</evidence>
<dbReference type="PDB" id="1G9P">
    <property type="method" value="NMR"/>
    <property type="chains" value="A=1-45"/>
</dbReference>
<dbReference type="PDB" id="1HP3">
    <property type="method" value="NMR"/>
    <property type="chains" value="A=1-32"/>
</dbReference>
<dbReference type="PDBsum" id="1G9P"/>
<dbReference type="PDBsum" id="1HP3"/>
<dbReference type="SMR" id="P82852"/>
<dbReference type="ArachnoServer" id="AS000204">
    <property type="toxin name" value="omega-hexatoxin-Hv2a"/>
</dbReference>
<dbReference type="EvolutionaryTrace" id="P82852"/>
<dbReference type="GO" id="GO:0005576">
    <property type="term" value="C:extracellular region"/>
    <property type="evidence" value="ECO:0007669"/>
    <property type="project" value="UniProtKB-SubCell"/>
</dbReference>
<dbReference type="GO" id="GO:0019855">
    <property type="term" value="F:calcium channel inhibitor activity"/>
    <property type="evidence" value="ECO:0000314"/>
    <property type="project" value="CACAO"/>
</dbReference>
<dbReference type="GO" id="GO:0019871">
    <property type="term" value="F:sodium channel inhibitor activity"/>
    <property type="evidence" value="ECO:0007669"/>
    <property type="project" value="InterPro"/>
</dbReference>
<dbReference type="GO" id="GO:0090729">
    <property type="term" value="F:toxin activity"/>
    <property type="evidence" value="ECO:0007669"/>
    <property type="project" value="UniProtKB-KW"/>
</dbReference>
<dbReference type="Gene3D" id="4.10.40.10">
    <property type="match status" value="1"/>
</dbReference>
<dbReference type="InterPro" id="IPR013139">
    <property type="entry name" value="Omega_atracotoxin_CS2"/>
</dbReference>
<dbReference type="InterPro" id="IPR012628">
    <property type="entry name" value="Toxin_23"/>
</dbReference>
<dbReference type="Pfam" id="PF08093">
    <property type="entry name" value="Toxin_23"/>
    <property type="match status" value="1"/>
</dbReference>
<dbReference type="SUPFAM" id="SSF57059">
    <property type="entry name" value="omega toxin-like"/>
    <property type="match status" value="1"/>
</dbReference>
<dbReference type="PROSITE" id="PS60017">
    <property type="entry name" value="OMEGA_ACTX_2"/>
    <property type="match status" value="1"/>
</dbReference>
<name>TOT2A_HADVE</name>
<comment type="function">
    <text evidence="2">Potent inhibitor of insect (bee brain), but not mammalian (rat trigeminal neurons), voltage-gated calcium channels (Cav). In vivo, injection into lone star ticks (Amblyomma americanum) induces curling of all eight legs into closed loops, followed by death.</text>
</comment>
<comment type="subcellular location">
    <subcellularLocation>
        <location evidence="1">Secreted</location>
    </subcellularLocation>
</comment>
<comment type="tissue specificity">
    <text evidence="4">Expressed by the venom gland.</text>
</comment>
<comment type="domain">
    <text evidence="3">The presence of a 'disulfide through disulfide knot' structurally defines this protein as a knottin.</text>
</comment>
<comment type="similarity">
    <text evidence="3">Belongs to the neurotoxin 15 family. 02 (omega-actx) subfamily.</text>
</comment>
<keyword id="KW-0002">3D-structure</keyword>
<keyword id="KW-0108">Calcium channel impairing toxin</keyword>
<keyword id="KW-0903">Direct protein sequencing</keyword>
<keyword id="KW-1015">Disulfide bond</keyword>
<keyword id="KW-0872">Ion channel impairing toxin</keyword>
<keyword id="KW-0960">Knottin</keyword>
<keyword id="KW-0528">Neurotoxin</keyword>
<keyword id="KW-0964">Secreted</keyword>
<keyword id="KW-0800">Toxin</keyword>
<keyword id="KW-1218">Voltage-gated calcium channel impairing toxin</keyword>
<sequence>LLACLFGNGRCSSNRDCCELTPVCKRGSCVSSGPGLVGGILGGIL</sequence>
<proteinExistence type="evidence at protein level"/>
<accession>P82852</accession>
<reference evidence="5 6" key="1">
    <citation type="journal article" date="2001" name="J. Biol. Chem.">
        <title>Discovery and structure of a potent and highly specific blocker of insect calcium channels.</title>
        <authorList>
            <person name="Wang X.-H."/>
            <person name="Connor M."/>
            <person name="Wilson D."/>
            <person name="Wilson H.I."/>
            <person name="Nicholson G.M."/>
            <person name="Smith R."/>
            <person name="Shaw D."/>
            <person name="Mackay J.P."/>
            <person name="Alewood P.F."/>
            <person name="Christie M.J."/>
            <person name="King G.F."/>
        </authorList>
    </citation>
    <scope>PROTEIN SEQUENCE</scope>
    <scope>STRUCTURE BY NMR</scope>
    <scope>DISULFIDE BONDS</scope>
    <scope>SUBCELLULAR LOCATION</scope>
    <source>
        <tissue>Venom</tissue>
    </source>
</reference>
<reference key="2">
    <citation type="journal article" date="2006" name="Toxicon">
        <title>Orally active acaricidal peptide toxins from spider venom.</title>
        <authorList>
            <person name="Mukherjee A.K."/>
            <person name="Sollod B.L."/>
            <person name="Wikel S.K."/>
            <person name="King G.F."/>
        </authorList>
    </citation>
    <scope>FUNCTION</scope>
    <scope>BIOASSAY</scope>
</reference>